<accession>B9KSB7</accession>
<keyword id="KW-0067">ATP-binding</keyword>
<keyword id="KW-0342">GTP-binding</keyword>
<keyword id="KW-0547">Nucleotide-binding</keyword>
<name>Y3085_CERSK</name>
<sequence length="298" mass="33177">MQEYRLVLVTGPSGAGRTTAINALEDMGYEVIDNLPLSFVPRLIEGPSIGRPIALGLDVRNRDFNATALIELIDRLTQDPRVALEVLYVDCSASELIRRYNQTRRRHPLAPAETPAEGVEREIDLLAPVRVRADHLIDTSEMSPHDLKAELSRWFDRGAATRLAVSVQSFSYKRGVPRGVDMIFDCRFLKNPYWVESLRALDGREASVADYISSDPRFAPFFEKLRDLVLFLLPAQLEEGKAHLSLGFGCTGGQHRSVAVAELLGNALAEAGWPVSKRHRELERRAAAVLPTHQGEKA</sequence>
<gene>
    <name type="ordered locus">RSKD131_3085</name>
</gene>
<comment type="function">
    <text evidence="1">Displays ATPase and GTPase activities.</text>
</comment>
<comment type="similarity">
    <text evidence="1">Belongs to the RapZ-like family.</text>
</comment>
<dbReference type="EMBL" id="CP001150">
    <property type="protein sequence ID" value="ACM02945.1"/>
    <property type="molecule type" value="Genomic_DNA"/>
</dbReference>
<dbReference type="SMR" id="B9KSB7"/>
<dbReference type="KEGG" id="rsk:RSKD131_3085"/>
<dbReference type="HOGENOM" id="CLU_059558_0_0_5"/>
<dbReference type="GO" id="GO:0005524">
    <property type="term" value="F:ATP binding"/>
    <property type="evidence" value="ECO:0007669"/>
    <property type="project" value="UniProtKB-UniRule"/>
</dbReference>
<dbReference type="GO" id="GO:0005525">
    <property type="term" value="F:GTP binding"/>
    <property type="evidence" value="ECO:0007669"/>
    <property type="project" value="UniProtKB-UniRule"/>
</dbReference>
<dbReference type="Gene3D" id="3.40.50.300">
    <property type="entry name" value="P-loop containing nucleotide triphosphate hydrolases"/>
    <property type="match status" value="1"/>
</dbReference>
<dbReference type="HAMAP" id="MF_00636">
    <property type="entry name" value="RapZ_like"/>
    <property type="match status" value="1"/>
</dbReference>
<dbReference type="InterPro" id="IPR027417">
    <property type="entry name" value="P-loop_NTPase"/>
</dbReference>
<dbReference type="InterPro" id="IPR005337">
    <property type="entry name" value="RapZ-like"/>
</dbReference>
<dbReference type="InterPro" id="IPR053930">
    <property type="entry name" value="RapZ-like_N"/>
</dbReference>
<dbReference type="InterPro" id="IPR053931">
    <property type="entry name" value="RapZ_C"/>
</dbReference>
<dbReference type="NCBIfam" id="NF003828">
    <property type="entry name" value="PRK05416.1"/>
    <property type="match status" value="1"/>
</dbReference>
<dbReference type="PANTHER" id="PTHR30448">
    <property type="entry name" value="RNASE ADAPTER PROTEIN RAPZ"/>
    <property type="match status" value="1"/>
</dbReference>
<dbReference type="PANTHER" id="PTHR30448:SF0">
    <property type="entry name" value="RNASE ADAPTER PROTEIN RAPZ"/>
    <property type="match status" value="1"/>
</dbReference>
<dbReference type="Pfam" id="PF22740">
    <property type="entry name" value="PapZ_C"/>
    <property type="match status" value="1"/>
</dbReference>
<dbReference type="Pfam" id="PF03668">
    <property type="entry name" value="RapZ-like_N"/>
    <property type="match status" value="1"/>
</dbReference>
<dbReference type="PIRSF" id="PIRSF005052">
    <property type="entry name" value="P-loopkin"/>
    <property type="match status" value="1"/>
</dbReference>
<dbReference type="SUPFAM" id="SSF52540">
    <property type="entry name" value="P-loop containing nucleoside triphosphate hydrolases"/>
    <property type="match status" value="1"/>
</dbReference>
<proteinExistence type="inferred from homology"/>
<organism>
    <name type="scientific">Cereibacter sphaeroides (strain KD131 / KCTC 12085)</name>
    <name type="common">Rhodobacter sphaeroides</name>
    <dbReference type="NCBI Taxonomy" id="557760"/>
    <lineage>
        <taxon>Bacteria</taxon>
        <taxon>Pseudomonadati</taxon>
        <taxon>Pseudomonadota</taxon>
        <taxon>Alphaproteobacteria</taxon>
        <taxon>Rhodobacterales</taxon>
        <taxon>Paracoccaceae</taxon>
        <taxon>Cereibacter</taxon>
    </lineage>
</organism>
<reference key="1">
    <citation type="journal article" date="2009" name="J. Bacteriol.">
        <title>Complete genome sequence of Rhodobacter sphaeroides KD131.</title>
        <authorList>
            <person name="Lim S.-K."/>
            <person name="Kim S.J."/>
            <person name="Cha S.H."/>
            <person name="Oh Y.-K."/>
            <person name="Rhee H.-J."/>
            <person name="Kim M.-S."/>
            <person name="Lee J.K."/>
        </authorList>
    </citation>
    <scope>NUCLEOTIDE SEQUENCE [LARGE SCALE GENOMIC DNA]</scope>
    <source>
        <strain>KD131 / KCTC 12085</strain>
    </source>
</reference>
<evidence type="ECO:0000255" key="1">
    <source>
        <dbReference type="HAMAP-Rule" id="MF_00636"/>
    </source>
</evidence>
<feature type="chain" id="PRO_0000383280" description="Nucleotide-binding protein RSKD131_3085">
    <location>
        <begin position="1"/>
        <end position="298"/>
    </location>
</feature>
<feature type="binding site" evidence="1">
    <location>
        <begin position="11"/>
        <end position="18"/>
    </location>
    <ligand>
        <name>ATP</name>
        <dbReference type="ChEBI" id="CHEBI:30616"/>
    </ligand>
</feature>
<feature type="binding site" evidence="1">
    <location>
        <begin position="58"/>
        <end position="61"/>
    </location>
    <ligand>
        <name>GTP</name>
        <dbReference type="ChEBI" id="CHEBI:37565"/>
    </ligand>
</feature>
<protein>
    <recommendedName>
        <fullName evidence="1">Nucleotide-binding protein RSKD131_3085</fullName>
    </recommendedName>
</protein>